<protein>
    <recommendedName>
        <fullName>Probable cytochrome P450 6a18</fullName>
        <ecNumber>1.14.-.-</ecNumber>
    </recommendedName>
    <alternativeName>
        <fullName>CYPVIA18</fullName>
    </alternativeName>
</protein>
<dbReference type="EC" id="1.14.-.-"/>
<dbReference type="EMBL" id="AE014297">
    <property type="protein sequence ID" value="AAF56712.1"/>
    <property type="molecule type" value="Genomic_DNA"/>
</dbReference>
<dbReference type="EMBL" id="AY071195">
    <property type="protein sequence ID" value="AAL48817.1"/>
    <property type="molecule type" value="mRNA"/>
</dbReference>
<dbReference type="RefSeq" id="NP_001287562.1">
    <property type="nucleotide sequence ID" value="NM_001300633.1"/>
</dbReference>
<dbReference type="RefSeq" id="NP_651563.1">
    <property type="nucleotide sequence ID" value="NM_143306.3"/>
</dbReference>
<dbReference type="SMR" id="Q9VB31"/>
<dbReference type="FunCoup" id="Q9VB31">
    <property type="interactions" value="10"/>
</dbReference>
<dbReference type="STRING" id="7227.FBpp0308423"/>
<dbReference type="GlyGen" id="Q9VB31">
    <property type="glycosylation" value="1 site"/>
</dbReference>
<dbReference type="PaxDb" id="7227-FBpp0084553"/>
<dbReference type="DNASU" id="43304"/>
<dbReference type="EnsemblMetazoa" id="FBtr0085183">
    <property type="protein sequence ID" value="FBpp0084553"/>
    <property type="gene ID" value="FBgn0039519"/>
</dbReference>
<dbReference type="EnsemblMetazoa" id="FBtr0339319">
    <property type="protein sequence ID" value="FBpp0308423"/>
    <property type="gene ID" value="FBgn0039519"/>
</dbReference>
<dbReference type="GeneID" id="43304"/>
<dbReference type="KEGG" id="dme:Dmel_CG13977"/>
<dbReference type="UCSC" id="CG13977-RA">
    <property type="organism name" value="d. melanogaster"/>
</dbReference>
<dbReference type="AGR" id="FB:FBgn0039519"/>
<dbReference type="CTD" id="43304"/>
<dbReference type="FlyBase" id="FBgn0039519">
    <property type="gene designation" value="Cyp6a18"/>
</dbReference>
<dbReference type="VEuPathDB" id="VectorBase:FBgn0039519"/>
<dbReference type="eggNOG" id="KOG0158">
    <property type="taxonomic scope" value="Eukaryota"/>
</dbReference>
<dbReference type="GeneTree" id="ENSGT00940000165972"/>
<dbReference type="HOGENOM" id="CLU_001570_5_2_1"/>
<dbReference type="InParanoid" id="Q9VB31"/>
<dbReference type="OMA" id="PLIFDPH"/>
<dbReference type="OrthoDB" id="2789670at2759"/>
<dbReference type="PhylomeDB" id="Q9VB31"/>
<dbReference type="BioGRID-ORCS" id="43304">
    <property type="hits" value="0 hits in 3 CRISPR screens"/>
</dbReference>
<dbReference type="GenomeRNAi" id="43304"/>
<dbReference type="PRO" id="PR:Q9VB31"/>
<dbReference type="Proteomes" id="UP000000803">
    <property type="component" value="Chromosome 3R"/>
</dbReference>
<dbReference type="Bgee" id="FBgn0039519">
    <property type="expression patterns" value="Expressed in adult Malpighian tubule principal cell of lower segment in Malpighian tubule and 27 other cell types or tissues"/>
</dbReference>
<dbReference type="ExpressionAtlas" id="Q9VB31">
    <property type="expression patterns" value="baseline and differential"/>
</dbReference>
<dbReference type="GO" id="GO:0005789">
    <property type="term" value="C:endoplasmic reticulum membrane"/>
    <property type="evidence" value="ECO:0007669"/>
    <property type="project" value="UniProtKB-SubCell"/>
</dbReference>
<dbReference type="GO" id="GO:0020037">
    <property type="term" value="F:heme binding"/>
    <property type="evidence" value="ECO:0007669"/>
    <property type="project" value="InterPro"/>
</dbReference>
<dbReference type="GO" id="GO:0005506">
    <property type="term" value="F:iron ion binding"/>
    <property type="evidence" value="ECO:0007669"/>
    <property type="project" value="InterPro"/>
</dbReference>
<dbReference type="GO" id="GO:0004497">
    <property type="term" value="F:monooxygenase activity"/>
    <property type="evidence" value="ECO:0007669"/>
    <property type="project" value="UniProtKB-KW"/>
</dbReference>
<dbReference type="GO" id="GO:0016705">
    <property type="term" value="F:oxidoreductase activity, acting on paired donors, with incorporation or reduction of molecular oxygen"/>
    <property type="evidence" value="ECO:0007669"/>
    <property type="project" value="InterPro"/>
</dbReference>
<dbReference type="CDD" id="cd11056">
    <property type="entry name" value="CYP6-like"/>
    <property type="match status" value="1"/>
</dbReference>
<dbReference type="FunFam" id="1.10.630.10:FF:000042">
    <property type="entry name" value="Cytochrome P450"/>
    <property type="match status" value="1"/>
</dbReference>
<dbReference type="Gene3D" id="1.10.630.10">
    <property type="entry name" value="Cytochrome P450"/>
    <property type="match status" value="1"/>
</dbReference>
<dbReference type="InterPro" id="IPR001128">
    <property type="entry name" value="Cyt_P450"/>
</dbReference>
<dbReference type="InterPro" id="IPR017972">
    <property type="entry name" value="Cyt_P450_CS"/>
</dbReference>
<dbReference type="InterPro" id="IPR002401">
    <property type="entry name" value="Cyt_P450_E_grp-I"/>
</dbReference>
<dbReference type="InterPro" id="IPR036396">
    <property type="entry name" value="Cyt_P450_sf"/>
</dbReference>
<dbReference type="InterPro" id="IPR050476">
    <property type="entry name" value="Insect_CytP450_Detox"/>
</dbReference>
<dbReference type="PANTHER" id="PTHR24292">
    <property type="entry name" value="CYTOCHROME P450"/>
    <property type="match status" value="1"/>
</dbReference>
<dbReference type="PANTHER" id="PTHR24292:SF100">
    <property type="entry name" value="CYTOCHROME P450 6A16, ISOFORM B-RELATED"/>
    <property type="match status" value="1"/>
</dbReference>
<dbReference type="Pfam" id="PF00067">
    <property type="entry name" value="p450"/>
    <property type="match status" value="1"/>
</dbReference>
<dbReference type="PRINTS" id="PR00463">
    <property type="entry name" value="EP450I"/>
</dbReference>
<dbReference type="PRINTS" id="PR00385">
    <property type="entry name" value="P450"/>
</dbReference>
<dbReference type="SUPFAM" id="SSF48264">
    <property type="entry name" value="Cytochrome P450"/>
    <property type="match status" value="1"/>
</dbReference>
<dbReference type="PROSITE" id="PS00086">
    <property type="entry name" value="CYTOCHROME_P450"/>
    <property type="match status" value="1"/>
</dbReference>
<proteinExistence type="evidence at transcript level"/>
<gene>
    <name type="primary">Cyp6a18</name>
    <name type="ORF">CG13977</name>
</gene>
<feature type="chain" id="PRO_0000051872" description="Probable cytochrome P450 6a18">
    <location>
        <begin position="1"/>
        <end position="507"/>
    </location>
</feature>
<feature type="binding site" description="axial binding residue" evidence="1">
    <location>
        <position position="451"/>
    </location>
    <ligand>
        <name>heme</name>
        <dbReference type="ChEBI" id="CHEBI:30413"/>
    </ligand>
    <ligandPart>
        <name>Fe</name>
        <dbReference type="ChEBI" id="CHEBI:18248"/>
    </ligandPart>
</feature>
<name>C6A18_DROME</name>
<sequence length="507" mass="57956">MQLTYFLFQVAVALLAIVTYILHRKLTYFKRRGIPYDKPHPLRGNMEGYKKTRTVHEIHQEYYNKYRNSKAPFVGFYLFQKPAAFVIDLELAKQILIKNFSNFTDKGIYYNEKDDPMSAHLFNLDGPQWRLLRSKLSSTFTSGKMKFMYPTVVSVAEEFMAVMHEKVSENSILDVRDLVARFTVDVIGTCAFGIKCNSLRDEKAEFLHFGRRALLDSRHGNLVSGLMRSYPNLARRLGLCRNTAQIQEFYQRIVKETVTLREKENIKRNDFMDMLIGLKNQKNMTLENGEVVKGLTMDEIVAQAFVFFIAGFDTSSSTMGFALYELAKNPSIQDKVRAELGQVLEQHDQKFTYECIKDLKYLDQVINETLRHYTIVPNVDRVAAKRFVVPGNPKFVIEAGQSVIIPSSAIHHDPSIYPEPNEFRPERFSPEESAKRPSVAWLPFGEGPRNCIGLRFGQMQARIGLAMLIKNFTFSPCSATPDPLTFDPHSAILLGIKGGIQLKVEAI</sequence>
<accession>Q9VB31</accession>
<evidence type="ECO:0000250" key="1"/>
<evidence type="ECO:0000305" key="2"/>
<keyword id="KW-0256">Endoplasmic reticulum</keyword>
<keyword id="KW-0349">Heme</keyword>
<keyword id="KW-0408">Iron</keyword>
<keyword id="KW-0472">Membrane</keyword>
<keyword id="KW-0479">Metal-binding</keyword>
<keyword id="KW-0492">Microsome</keyword>
<keyword id="KW-0503">Monooxygenase</keyword>
<keyword id="KW-0560">Oxidoreductase</keyword>
<keyword id="KW-1185">Reference proteome</keyword>
<organism>
    <name type="scientific">Drosophila melanogaster</name>
    <name type="common">Fruit fly</name>
    <dbReference type="NCBI Taxonomy" id="7227"/>
    <lineage>
        <taxon>Eukaryota</taxon>
        <taxon>Metazoa</taxon>
        <taxon>Ecdysozoa</taxon>
        <taxon>Arthropoda</taxon>
        <taxon>Hexapoda</taxon>
        <taxon>Insecta</taxon>
        <taxon>Pterygota</taxon>
        <taxon>Neoptera</taxon>
        <taxon>Endopterygota</taxon>
        <taxon>Diptera</taxon>
        <taxon>Brachycera</taxon>
        <taxon>Muscomorpha</taxon>
        <taxon>Ephydroidea</taxon>
        <taxon>Drosophilidae</taxon>
        <taxon>Drosophila</taxon>
        <taxon>Sophophora</taxon>
    </lineage>
</organism>
<comment type="function">
    <text evidence="1">May be involved in the metabolism of insect hormones and in the breakdown of synthetic insecticides.</text>
</comment>
<comment type="cofactor">
    <cofactor evidence="1">
        <name>heme</name>
        <dbReference type="ChEBI" id="CHEBI:30413"/>
    </cofactor>
</comment>
<comment type="subcellular location">
    <subcellularLocation>
        <location evidence="2">Endoplasmic reticulum membrane</location>
        <topology evidence="2">Peripheral membrane protein</topology>
    </subcellularLocation>
    <subcellularLocation>
        <location evidence="2">Microsome membrane</location>
        <topology evidence="2">Peripheral membrane protein</topology>
    </subcellularLocation>
</comment>
<comment type="similarity">
    <text evidence="2">Belongs to the cytochrome P450 family.</text>
</comment>
<reference key="1">
    <citation type="journal article" date="2000" name="Science">
        <title>The genome sequence of Drosophila melanogaster.</title>
        <authorList>
            <person name="Adams M.D."/>
            <person name="Celniker S.E."/>
            <person name="Holt R.A."/>
            <person name="Evans C.A."/>
            <person name="Gocayne J.D."/>
            <person name="Amanatides P.G."/>
            <person name="Scherer S.E."/>
            <person name="Li P.W."/>
            <person name="Hoskins R.A."/>
            <person name="Galle R.F."/>
            <person name="George R.A."/>
            <person name="Lewis S.E."/>
            <person name="Richards S."/>
            <person name="Ashburner M."/>
            <person name="Henderson S.N."/>
            <person name="Sutton G.G."/>
            <person name="Wortman J.R."/>
            <person name="Yandell M.D."/>
            <person name="Zhang Q."/>
            <person name="Chen L.X."/>
            <person name="Brandon R.C."/>
            <person name="Rogers Y.-H.C."/>
            <person name="Blazej R.G."/>
            <person name="Champe M."/>
            <person name="Pfeiffer B.D."/>
            <person name="Wan K.H."/>
            <person name="Doyle C."/>
            <person name="Baxter E.G."/>
            <person name="Helt G."/>
            <person name="Nelson C.R."/>
            <person name="Miklos G.L.G."/>
            <person name="Abril J.F."/>
            <person name="Agbayani A."/>
            <person name="An H.-J."/>
            <person name="Andrews-Pfannkoch C."/>
            <person name="Baldwin D."/>
            <person name="Ballew R.M."/>
            <person name="Basu A."/>
            <person name="Baxendale J."/>
            <person name="Bayraktaroglu L."/>
            <person name="Beasley E.M."/>
            <person name="Beeson K.Y."/>
            <person name="Benos P.V."/>
            <person name="Berman B.P."/>
            <person name="Bhandari D."/>
            <person name="Bolshakov S."/>
            <person name="Borkova D."/>
            <person name="Botchan M.R."/>
            <person name="Bouck J."/>
            <person name="Brokstein P."/>
            <person name="Brottier P."/>
            <person name="Burtis K.C."/>
            <person name="Busam D.A."/>
            <person name="Butler H."/>
            <person name="Cadieu E."/>
            <person name="Center A."/>
            <person name="Chandra I."/>
            <person name="Cherry J.M."/>
            <person name="Cawley S."/>
            <person name="Dahlke C."/>
            <person name="Davenport L.B."/>
            <person name="Davies P."/>
            <person name="de Pablos B."/>
            <person name="Delcher A."/>
            <person name="Deng Z."/>
            <person name="Mays A.D."/>
            <person name="Dew I."/>
            <person name="Dietz S.M."/>
            <person name="Dodson K."/>
            <person name="Doup L.E."/>
            <person name="Downes M."/>
            <person name="Dugan-Rocha S."/>
            <person name="Dunkov B.C."/>
            <person name="Dunn P."/>
            <person name="Durbin K.J."/>
            <person name="Evangelista C.C."/>
            <person name="Ferraz C."/>
            <person name="Ferriera S."/>
            <person name="Fleischmann W."/>
            <person name="Fosler C."/>
            <person name="Gabrielian A.E."/>
            <person name="Garg N.S."/>
            <person name="Gelbart W.M."/>
            <person name="Glasser K."/>
            <person name="Glodek A."/>
            <person name="Gong F."/>
            <person name="Gorrell J.H."/>
            <person name="Gu Z."/>
            <person name="Guan P."/>
            <person name="Harris M."/>
            <person name="Harris N.L."/>
            <person name="Harvey D.A."/>
            <person name="Heiman T.J."/>
            <person name="Hernandez J.R."/>
            <person name="Houck J."/>
            <person name="Hostin D."/>
            <person name="Houston K.A."/>
            <person name="Howland T.J."/>
            <person name="Wei M.-H."/>
            <person name="Ibegwam C."/>
            <person name="Jalali M."/>
            <person name="Kalush F."/>
            <person name="Karpen G.H."/>
            <person name="Ke Z."/>
            <person name="Kennison J.A."/>
            <person name="Ketchum K.A."/>
            <person name="Kimmel B.E."/>
            <person name="Kodira C.D."/>
            <person name="Kraft C.L."/>
            <person name="Kravitz S."/>
            <person name="Kulp D."/>
            <person name="Lai Z."/>
            <person name="Lasko P."/>
            <person name="Lei Y."/>
            <person name="Levitsky A.A."/>
            <person name="Li J.H."/>
            <person name="Li Z."/>
            <person name="Liang Y."/>
            <person name="Lin X."/>
            <person name="Liu X."/>
            <person name="Mattei B."/>
            <person name="McIntosh T.C."/>
            <person name="McLeod M.P."/>
            <person name="McPherson D."/>
            <person name="Merkulov G."/>
            <person name="Milshina N.V."/>
            <person name="Mobarry C."/>
            <person name="Morris J."/>
            <person name="Moshrefi A."/>
            <person name="Mount S.M."/>
            <person name="Moy M."/>
            <person name="Murphy B."/>
            <person name="Murphy L."/>
            <person name="Muzny D.M."/>
            <person name="Nelson D.L."/>
            <person name="Nelson D.R."/>
            <person name="Nelson K.A."/>
            <person name="Nixon K."/>
            <person name="Nusskern D.R."/>
            <person name="Pacleb J.M."/>
            <person name="Palazzolo M."/>
            <person name="Pittman G.S."/>
            <person name="Pan S."/>
            <person name="Pollard J."/>
            <person name="Puri V."/>
            <person name="Reese M.G."/>
            <person name="Reinert K."/>
            <person name="Remington K."/>
            <person name="Saunders R.D.C."/>
            <person name="Scheeler F."/>
            <person name="Shen H."/>
            <person name="Shue B.C."/>
            <person name="Siden-Kiamos I."/>
            <person name="Simpson M."/>
            <person name="Skupski M.P."/>
            <person name="Smith T.J."/>
            <person name="Spier E."/>
            <person name="Spradling A.C."/>
            <person name="Stapleton M."/>
            <person name="Strong R."/>
            <person name="Sun E."/>
            <person name="Svirskas R."/>
            <person name="Tector C."/>
            <person name="Turner R."/>
            <person name="Venter E."/>
            <person name="Wang A.H."/>
            <person name="Wang X."/>
            <person name="Wang Z.-Y."/>
            <person name="Wassarman D.A."/>
            <person name="Weinstock G.M."/>
            <person name="Weissenbach J."/>
            <person name="Williams S.M."/>
            <person name="Woodage T."/>
            <person name="Worley K.C."/>
            <person name="Wu D."/>
            <person name="Yang S."/>
            <person name="Yao Q.A."/>
            <person name="Ye J."/>
            <person name="Yeh R.-F."/>
            <person name="Zaveri J.S."/>
            <person name="Zhan M."/>
            <person name="Zhang G."/>
            <person name="Zhao Q."/>
            <person name="Zheng L."/>
            <person name="Zheng X.H."/>
            <person name="Zhong F.N."/>
            <person name="Zhong W."/>
            <person name="Zhou X."/>
            <person name="Zhu S.C."/>
            <person name="Zhu X."/>
            <person name="Smith H.O."/>
            <person name="Gibbs R.A."/>
            <person name="Myers E.W."/>
            <person name="Rubin G.M."/>
            <person name="Venter J.C."/>
        </authorList>
    </citation>
    <scope>NUCLEOTIDE SEQUENCE [LARGE SCALE GENOMIC DNA]</scope>
    <source>
        <strain>Berkeley</strain>
    </source>
</reference>
<reference key="2">
    <citation type="journal article" date="2002" name="Genome Biol.">
        <title>Annotation of the Drosophila melanogaster euchromatic genome: a systematic review.</title>
        <authorList>
            <person name="Misra S."/>
            <person name="Crosby M.A."/>
            <person name="Mungall C.J."/>
            <person name="Matthews B.B."/>
            <person name="Campbell K.S."/>
            <person name="Hradecky P."/>
            <person name="Huang Y."/>
            <person name="Kaminker J.S."/>
            <person name="Millburn G.H."/>
            <person name="Prochnik S.E."/>
            <person name="Smith C.D."/>
            <person name="Tupy J.L."/>
            <person name="Whitfield E.J."/>
            <person name="Bayraktaroglu L."/>
            <person name="Berman B.P."/>
            <person name="Bettencourt B.R."/>
            <person name="Celniker S.E."/>
            <person name="de Grey A.D.N.J."/>
            <person name="Drysdale R.A."/>
            <person name="Harris N.L."/>
            <person name="Richter J."/>
            <person name="Russo S."/>
            <person name="Schroeder A.J."/>
            <person name="Shu S.Q."/>
            <person name="Stapleton M."/>
            <person name="Yamada C."/>
            <person name="Ashburner M."/>
            <person name="Gelbart W.M."/>
            <person name="Rubin G.M."/>
            <person name="Lewis S.E."/>
        </authorList>
    </citation>
    <scope>GENOME REANNOTATION</scope>
    <source>
        <strain>Berkeley</strain>
    </source>
</reference>
<reference key="3">
    <citation type="journal article" date="2002" name="Genome Biol.">
        <title>A Drosophila full-length cDNA resource.</title>
        <authorList>
            <person name="Stapleton M."/>
            <person name="Carlson J.W."/>
            <person name="Brokstein P."/>
            <person name="Yu C."/>
            <person name="Champe M."/>
            <person name="George R.A."/>
            <person name="Guarin H."/>
            <person name="Kronmiller B."/>
            <person name="Pacleb J.M."/>
            <person name="Park S."/>
            <person name="Wan K.H."/>
            <person name="Rubin G.M."/>
            <person name="Celniker S.E."/>
        </authorList>
    </citation>
    <scope>NUCLEOTIDE SEQUENCE [LARGE SCALE MRNA]</scope>
    <source>
        <strain>Berkeley</strain>
        <tissue>Embryo</tissue>
    </source>
</reference>